<protein>
    <recommendedName>
        <fullName evidence="1">Glutamate-1-semialdehyde 2,1-aminomutase</fullName>
        <shortName evidence="1">GSA</shortName>
        <ecNumber evidence="1">5.4.3.8</ecNumber>
    </recommendedName>
    <alternativeName>
        <fullName evidence="1">Glutamate-1-semialdehyde aminotransferase</fullName>
        <shortName evidence="1">GSA-AT</shortName>
    </alternativeName>
</protein>
<gene>
    <name evidence="1" type="primary">hemL</name>
    <name type="ordered locus">DvMF_2502</name>
</gene>
<name>GSA_NITV9</name>
<reference key="1">
    <citation type="submission" date="2008-10" db="EMBL/GenBank/DDBJ databases">
        <title>Complete sequence of Desulfovibrio vulgaris str. 'Miyazaki F'.</title>
        <authorList>
            <person name="Lucas S."/>
            <person name="Copeland A."/>
            <person name="Lapidus A."/>
            <person name="Glavina del Rio T."/>
            <person name="Dalin E."/>
            <person name="Tice H."/>
            <person name="Bruce D."/>
            <person name="Goodwin L."/>
            <person name="Pitluck S."/>
            <person name="Sims D."/>
            <person name="Brettin T."/>
            <person name="Detter J.C."/>
            <person name="Han C."/>
            <person name="Larimer F."/>
            <person name="Land M."/>
            <person name="Hauser L."/>
            <person name="Kyrpides N."/>
            <person name="Mikhailova N."/>
            <person name="Hazen T.C."/>
            <person name="Richardson P."/>
        </authorList>
    </citation>
    <scope>NUCLEOTIDE SEQUENCE [LARGE SCALE GENOMIC DNA]</scope>
    <source>
        <strain>DSM 19637 / Miyazaki F</strain>
    </source>
</reference>
<sequence length="425" mass="44474">MDHRSKELFERAQQLIPGGVNSPVRACLGVDSDPLFVAHAKGSHLTTVDGTSFVDYVQSWGPMLLGHAHPVVASAIHAAVDRGTSYGAPCEDEVVLAEAVIDALPGVEMVRMVNSGTEATMSALRLARGVTGRNKVVKFVGCYHGHADAFLASAGSGVATLSIPGTPGVPEATVRDTLLAPYNDLTAVAELFTLHGKDIAAIIVEPVAGNMGLVLPMNGFLQGLRDLCTEHGALLIFDEVITGFRVNYGGAQKRFDITPDLTTLGKIIGGGLPVGAYGGRADLMRRIAPCGEVYQAGTLSGNPLAMAAGIATLAELKKSDYDALEARVAALATELQAILAAKGVPVRVNTIASMFTVFFTDQPVTDFASAKTANAALYTSYYKQMRDKGIYLAPSPFEAAMVSFAHTDADLAALLDAARAITLSA</sequence>
<comment type="catalytic activity">
    <reaction evidence="1">
        <text>(S)-4-amino-5-oxopentanoate = 5-aminolevulinate</text>
        <dbReference type="Rhea" id="RHEA:14265"/>
        <dbReference type="ChEBI" id="CHEBI:57501"/>
        <dbReference type="ChEBI" id="CHEBI:356416"/>
        <dbReference type="EC" id="5.4.3.8"/>
    </reaction>
</comment>
<comment type="cofactor">
    <cofactor evidence="1">
        <name>pyridoxal 5'-phosphate</name>
        <dbReference type="ChEBI" id="CHEBI:597326"/>
    </cofactor>
</comment>
<comment type="pathway">
    <text evidence="1">Porphyrin-containing compound metabolism; protoporphyrin-IX biosynthesis; 5-aminolevulinate from L-glutamyl-tRNA(Glu): step 2/2.</text>
</comment>
<comment type="subunit">
    <text evidence="1">Homodimer.</text>
</comment>
<comment type="subcellular location">
    <subcellularLocation>
        <location evidence="1">Cytoplasm</location>
    </subcellularLocation>
</comment>
<comment type="similarity">
    <text evidence="1">Belongs to the class-III pyridoxal-phosphate-dependent aminotransferase family. HemL subfamily.</text>
</comment>
<dbReference type="EC" id="5.4.3.8" evidence="1"/>
<dbReference type="EMBL" id="CP001197">
    <property type="protein sequence ID" value="ACL09442.1"/>
    <property type="molecule type" value="Genomic_DNA"/>
</dbReference>
<dbReference type="SMR" id="B8DN02"/>
<dbReference type="STRING" id="883.DvMF_2502"/>
<dbReference type="KEGG" id="dvm:DvMF_2502"/>
<dbReference type="eggNOG" id="COG0001">
    <property type="taxonomic scope" value="Bacteria"/>
</dbReference>
<dbReference type="HOGENOM" id="CLU_016922_1_5_7"/>
<dbReference type="OrthoDB" id="9801052at2"/>
<dbReference type="UniPathway" id="UPA00251">
    <property type="reaction ID" value="UER00317"/>
</dbReference>
<dbReference type="GO" id="GO:0005737">
    <property type="term" value="C:cytoplasm"/>
    <property type="evidence" value="ECO:0007669"/>
    <property type="project" value="UniProtKB-SubCell"/>
</dbReference>
<dbReference type="GO" id="GO:0042286">
    <property type="term" value="F:glutamate-1-semialdehyde 2,1-aminomutase activity"/>
    <property type="evidence" value="ECO:0007669"/>
    <property type="project" value="UniProtKB-UniRule"/>
</dbReference>
<dbReference type="GO" id="GO:0030170">
    <property type="term" value="F:pyridoxal phosphate binding"/>
    <property type="evidence" value="ECO:0007669"/>
    <property type="project" value="InterPro"/>
</dbReference>
<dbReference type="GO" id="GO:0008483">
    <property type="term" value="F:transaminase activity"/>
    <property type="evidence" value="ECO:0007669"/>
    <property type="project" value="InterPro"/>
</dbReference>
<dbReference type="GO" id="GO:0006782">
    <property type="term" value="P:protoporphyrinogen IX biosynthetic process"/>
    <property type="evidence" value="ECO:0007669"/>
    <property type="project" value="UniProtKB-UniRule"/>
</dbReference>
<dbReference type="CDD" id="cd00610">
    <property type="entry name" value="OAT_like"/>
    <property type="match status" value="1"/>
</dbReference>
<dbReference type="FunFam" id="3.40.640.10:FF:000021">
    <property type="entry name" value="Glutamate-1-semialdehyde 2,1-aminomutase"/>
    <property type="match status" value="1"/>
</dbReference>
<dbReference type="Gene3D" id="3.90.1150.10">
    <property type="entry name" value="Aspartate Aminotransferase, domain 1"/>
    <property type="match status" value="1"/>
</dbReference>
<dbReference type="Gene3D" id="3.40.640.10">
    <property type="entry name" value="Type I PLP-dependent aspartate aminotransferase-like (Major domain)"/>
    <property type="match status" value="1"/>
</dbReference>
<dbReference type="HAMAP" id="MF_00375">
    <property type="entry name" value="HemL_aminotrans_3"/>
    <property type="match status" value="1"/>
</dbReference>
<dbReference type="InterPro" id="IPR004639">
    <property type="entry name" value="4pyrrol_synth_GluAld_NH2Trfase"/>
</dbReference>
<dbReference type="InterPro" id="IPR005814">
    <property type="entry name" value="Aminotrans_3"/>
</dbReference>
<dbReference type="InterPro" id="IPR015424">
    <property type="entry name" value="PyrdxlP-dep_Trfase"/>
</dbReference>
<dbReference type="InterPro" id="IPR015421">
    <property type="entry name" value="PyrdxlP-dep_Trfase_major"/>
</dbReference>
<dbReference type="InterPro" id="IPR015422">
    <property type="entry name" value="PyrdxlP-dep_Trfase_small"/>
</dbReference>
<dbReference type="NCBIfam" id="TIGR00713">
    <property type="entry name" value="hemL"/>
    <property type="match status" value="1"/>
</dbReference>
<dbReference type="NCBIfam" id="NF000818">
    <property type="entry name" value="PRK00062.1"/>
    <property type="match status" value="1"/>
</dbReference>
<dbReference type="PANTHER" id="PTHR43713">
    <property type="entry name" value="GLUTAMATE-1-SEMIALDEHYDE 2,1-AMINOMUTASE"/>
    <property type="match status" value="1"/>
</dbReference>
<dbReference type="PANTHER" id="PTHR43713:SF3">
    <property type="entry name" value="GLUTAMATE-1-SEMIALDEHYDE 2,1-AMINOMUTASE 1, CHLOROPLASTIC-RELATED"/>
    <property type="match status" value="1"/>
</dbReference>
<dbReference type="Pfam" id="PF00202">
    <property type="entry name" value="Aminotran_3"/>
    <property type="match status" value="1"/>
</dbReference>
<dbReference type="SUPFAM" id="SSF53383">
    <property type="entry name" value="PLP-dependent transferases"/>
    <property type="match status" value="1"/>
</dbReference>
<accession>B8DN02</accession>
<organism>
    <name type="scientific">Nitratidesulfovibrio vulgaris (strain DSM 19637 / Miyazaki F)</name>
    <name type="common">Desulfovibrio vulgaris</name>
    <dbReference type="NCBI Taxonomy" id="883"/>
    <lineage>
        <taxon>Bacteria</taxon>
        <taxon>Pseudomonadati</taxon>
        <taxon>Thermodesulfobacteriota</taxon>
        <taxon>Desulfovibrionia</taxon>
        <taxon>Desulfovibrionales</taxon>
        <taxon>Desulfovibrionaceae</taxon>
        <taxon>Nitratidesulfovibrio</taxon>
    </lineage>
</organism>
<evidence type="ECO:0000255" key="1">
    <source>
        <dbReference type="HAMAP-Rule" id="MF_00375"/>
    </source>
</evidence>
<proteinExistence type="inferred from homology"/>
<feature type="chain" id="PRO_1000121878" description="Glutamate-1-semialdehyde 2,1-aminomutase">
    <location>
        <begin position="1"/>
        <end position="425"/>
    </location>
</feature>
<feature type="modified residue" description="N6-(pyridoxal phosphate)lysine" evidence="1">
    <location>
        <position position="266"/>
    </location>
</feature>
<keyword id="KW-0963">Cytoplasm</keyword>
<keyword id="KW-0413">Isomerase</keyword>
<keyword id="KW-0627">Porphyrin biosynthesis</keyword>
<keyword id="KW-0663">Pyridoxal phosphate</keyword>